<feature type="chain" id="PRO_0000341863" description="2-succinyl-5-enolpyruvyl-6-hydroxy-3-cyclohexene-1-carboxylate synthase">
    <location>
        <begin position="1"/>
        <end position="556"/>
    </location>
</feature>
<sequence>MNHSEALTEQVFSFASELYAYGVREVVISPGSRSTPLALAFEAHPNIKTWIHPDERSAAFFALGLIKGSEKPVAILCTSGTAAANYTPAIAESQISRLPLVVLTSDRPHELRSVGAPQAINQVNMFSNYVNFQFDLPIADGSEHTIDTINYQMQIASQYLYGPHRGPIHFNLPFREPLTPDLDRVDLLTSVTKTLPHYQKSISVDDIKDILQEKNGLIIVGDMQHQAVDQILTYSTIYDLPILADPLSQLRKEKHPNVITTYDLLYRAGLNLEVDYVIRVGKPVISKKLNQWLKKTDAYQIIVQNNDQIDVFPTPPHISYEISANDFFRSLMEEPLVERKKWLQQWQSLEQQARIEISDYLKHATDEAAYVGSLIQKLTKEDTLFVGNSMPIRDVDNLLFDSEASVYANRGANGIDGVVSTALGMAAHKNVILLIGDLSFYHDMNGLLMAKLNELHINIVLVNNNGGGIFSYLPQKRSATKYFERLFGTPTGLNFEYTALLYDFTFKRFDNLTDFKYAELSKMGSHMYEVITNRDENLHQHQNLYQKLSEIVNVTL</sequence>
<accession>Q8CPQ5</accession>
<comment type="function">
    <text evidence="1">Catalyzes the thiamine diphosphate-dependent decarboxylation of 2-oxoglutarate and the subsequent addition of the resulting succinic semialdehyde-thiamine pyrophosphate anion to isochorismate to yield 2-succinyl-5-enolpyruvyl-6-hydroxy-3-cyclohexene-1-carboxylate (SEPHCHC).</text>
</comment>
<comment type="catalytic activity">
    <reaction evidence="1">
        <text>isochorismate + 2-oxoglutarate + H(+) = 5-enolpyruvoyl-6-hydroxy-2-succinyl-cyclohex-3-ene-1-carboxylate + CO2</text>
        <dbReference type="Rhea" id="RHEA:25593"/>
        <dbReference type="ChEBI" id="CHEBI:15378"/>
        <dbReference type="ChEBI" id="CHEBI:16526"/>
        <dbReference type="ChEBI" id="CHEBI:16810"/>
        <dbReference type="ChEBI" id="CHEBI:29780"/>
        <dbReference type="ChEBI" id="CHEBI:58818"/>
        <dbReference type="EC" id="2.2.1.9"/>
    </reaction>
</comment>
<comment type="cofactor">
    <cofactor evidence="1">
        <name>Mg(2+)</name>
        <dbReference type="ChEBI" id="CHEBI:18420"/>
    </cofactor>
    <cofactor evidence="1">
        <name>Mn(2+)</name>
        <dbReference type="ChEBI" id="CHEBI:29035"/>
    </cofactor>
</comment>
<comment type="cofactor">
    <cofactor evidence="1">
        <name>thiamine diphosphate</name>
        <dbReference type="ChEBI" id="CHEBI:58937"/>
    </cofactor>
    <text evidence="1">Binds 1 thiamine pyrophosphate per subunit.</text>
</comment>
<comment type="pathway">
    <text evidence="1">Quinol/quinone metabolism; 1,4-dihydroxy-2-naphthoate biosynthesis; 1,4-dihydroxy-2-naphthoate from chorismate: step 2/7.</text>
</comment>
<comment type="pathway">
    <text evidence="1">Quinol/quinone metabolism; menaquinone biosynthesis.</text>
</comment>
<comment type="subunit">
    <text evidence="1">Homodimer.</text>
</comment>
<comment type="similarity">
    <text evidence="1">Belongs to the TPP enzyme family. MenD subfamily.</text>
</comment>
<comment type="sequence caution" evidence="2">
    <conflict type="erroneous initiation">
        <sequence resource="EMBL-CDS" id="AAO04341"/>
    </conflict>
</comment>
<evidence type="ECO:0000255" key="1">
    <source>
        <dbReference type="HAMAP-Rule" id="MF_01659"/>
    </source>
</evidence>
<evidence type="ECO:0000305" key="2"/>
<organism>
    <name type="scientific">Staphylococcus epidermidis (strain ATCC 12228 / FDA PCI 1200)</name>
    <dbReference type="NCBI Taxonomy" id="176280"/>
    <lineage>
        <taxon>Bacteria</taxon>
        <taxon>Bacillati</taxon>
        <taxon>Bacillota</taxon>
        <taxon>Bacilli</taxon>
        <taxon>Bacillales</taxon>
        <taxon>Staphylococcaceae</taxon>
        <taxon>Staphylococcus</taxon>
    </lineage>
</organism>
<reference key="1">
    <citation type="journal article" date="2003" name="Mol. Microbiol.">
        <title>Genome-based analysis of virulence genes in a non-biofilm-forming Staphylococcus epidermidis strain (ATCC 12228).</title>
        <authorList>
            <person name="Zhang Y.-Q."/>
            <person name="Ren S.-X."/>
            <person name="Li H.-L."/>
            <person name="Wang Y.-X."/>
            <person name="Fu G."/>
            <person name="Yang J."/>
            <person name="Qin Z.-Q."/>
            <person name="Miao Y.-G."/>
            <person name="Wang W.-Y."/>
            <person name="Chen R.-S."/>
            <person name="Shen Y."/>
            <person name="Chen Z."/>
            <person name="Yuan Z.-H."/>
            <person name="Zhao G.-P."/>
            <person name="Qu D."/>
            <person name="Danchin A."/>
            <person name="Wen Y.-M."/>
        </authorList>
    </citation>
    <scope>NUCLEOTIDE SEQUENCE [LARGE SCALE GENOMIC DNA]</scope>
    <source>
        <strain>ATCC 12228 / FDA PCI 1200</strain>
    </source>
</reference>
<keyword id="KW-0460">Magnesium</keyword>
<keyword id="KW-0464">Manganese</keyword>
<keyword id="KW-0474">Menaquinone biosynthesis</keyword>
<keyword id="KW-0479">Metal-binding</keyword>
<keyword id="KW-0786">Thiamine pyrophosphate</keyword>
<keyword id="KW-0808">Transferase</keyword>
<gene>
    <name evidence="1" type="primary">menD</name>
    <name type="ordered locus">SE_0744</name>
</gene>
<protein>
    <recommendedName>
        <fullName evidence="1">2-succinyl-5-enolpyruvyl-6-hydroxy-3-cyclohexene-1-carboxylate synthase</fullName>
        <shortName evidence="1">SEPHCHC synthase</shortName>
        <ecNumber evidence="1">2.2.1.9</ecNumber>
    </recommendedName>
    <alternativeName>
        <fullName evidence="1">Menaquinone biosynthesis protein MenD</fullName>
    </alternativeName>
</protein>
<proteinExistence type="inferred from homology"/>
<dbReference type="EC" id="2.2.1.9" evidence="1"/>
<dbReference type="EMBL" id="AE015929">
    <property type="protein sequence ID" value="AAO04341.1"/>
    <property type="status" value="ALT_INIT"/>
    <property type="molecule type" value="Genomic_DNA"/>
</dbReference>
<dbReference type="RefSeq" id="NP_764299.1">
    <property type="nucleotide sequence ID" value="NC_004461.1"/>
</dbReference>
<dbReference type="SMR" id="Q8CPQ5"/>
<dbReference type="DNASU" id="1055700"/>
<dbReference type="KEGG" id="sep:SE_0744"/>
<dbReference type="PATRIC" id="fig|176280.10.peg.716"/>
<dbReference type="eggNOG" id="COG1165">
    <property type="taxonomic scope" value="Bacteria"/>
</dbReference>
<dbReference type="HOGENOM" id="CLU_006051_3_0_9"/>
<dbReference type="OrthoDB" id="9791859at2"/>
<dbReference type="UniPathway" id="UPA00079"/>
<dbReference type="UniPathway" id="UPA01057">
    <property type="reaction ID" value="UER00164"/>
</dbReference>
<dbReference type="Proteomes" id="UP000001411">
    <property type="component" value="Chromosome"/>
</dbReference>
<dbReference type="GO" id="GO:0070204">
    <property type="term" value="F:2-succinyl-5-enolpyruvyl-6-hydroxy-3-cyclohexene-1-carboxylic-acid synthase activity"/>
    <property type="evidence" value="ECO:0007669"/>
    <property type="project" value="UniProtKB-UniRule"/>
</dbReference>
<dbReference type="GO" id="GO:0000287">
    <property type="term" value="F:magnesium ion binding"/>
    <property type="evidence" value="ECO:0007669"/>
    <property type="project" value="UniProtKB-UniRule"/>
</dbReference>
<dbReference type="GO" id="GO:0030145">
    <property type="term" value="F:manganese ion binding"/>
    <property type="evidence" value="ECO:0007669"/>
    <property type="project" value="UniProtKB-UniRule"/>
</dbReference>
<dbReference type="GO" id="GO:0030976">
    <property type="term" value="F:thiamine pyrophosphate binding"/>
    <property type="evidence" value="ECO:0007669"/>
    <property type="project" value="UniProtKB-UniRule"/>
</dbReference>
<dbReference type="GO" id="GO:0009234">
    <property type="term" value="P:menaquinone biosynthetic process"/>
    <property type="evidence" value="ECO:0007669"/>
    <property type="project" value="UniProtKB-UniRule"/>
</dbReference>
<dbReference type="CDD" id="cd07037">
    <property type="entry name" value="TPP_PYR_MenD"/>
    <property type="match status" value="1"/>
</dbReference>
<dbReference type="CDD" id="cd02009">
    <property type="entry name" value="TPP_SHCHC_synthase"/>
    <property type="match status" value="1"/>
</dbReference>
<dbReference type="Gene3D" id="3.40.50.970">
    <property type="match status" value="2"/>
</dbReference>
<dbReference type="Gene3D" id="3.40.50.1220">
    <property type="entry name" value="TPP-binding domain"/>
    <property type="match status" value="1"/>
</dbReference>
<dbReference type="HAMAP" id="MF_01659">
    <property type="entry name" value="MenD"/>
    <property type="match status" value="1"/>
</dbReference>
<dbReference type="InterPro" id="IPR004433">
    <property type="entry name" value="MenaQ_synth_MenD"/>
</dbReference>
<dbReference type="InterPro" id="IPR032264">
    <property type="entry name" value="MenD_middle"/>
</dbReference>
<dbReference type="InterPro" id="IPR029061">
    <property type="entry name" value="THDP-binding"/>
</dbReference>
<dbReference type="InterPro" id="IPR012001">
    <property type="entry name" value="Thiamin_PyroP_enz_TPP-bd_dom"/>
</dbReference>
<dbReference type="InterPro" id="IPR011766">
    <property type="entry name" value="TPP_enzyme_TPP-bd"/>
</dbReference>
<dbReference type="NCBIfam" id="TIGR00173">
    <property type="entry name" value="menD"/>
    <property type="match status" value="1"/>
</dbReference>
<dbReference type="PANTHER" id="PTHR42916">
    <property type="entry name" value="2-SUCCINYL-5-ENOLPYRUVYL-6-HYDROXY-3-CYCLOHEXENE-1-CARBOXYLATE SYNTHASE"/>
    <property type="match status" value="1"/>
</dbReference>
<dbReference type="PANTHER" id="PTHR42916:SF1">
    <property type="entry name" value="PROTEIN PHYLLO, CHLOROPLASTIC"/>
    <property type="match status" value="1"/>
</dbReference>
<dbReference type="Pfam" id="PF02775">
    <property type="entry name" value="TPP_enzyme_C"/>
    <property type="match status" value="1"/>
</dbReference>
<dbReference type="Pfam" id="PF16582">
    <property type="entry name" value="TPP_enzyme_M_2"/>
    <property type="match status" value="1"/>
</dbReference>
<dbReference type="Pfam" id="PF02776">
    <property type="entry name" value="TPP_enzyme_N"/>
    <property type="match status" value="1"/>
</dbReference>
<dbReference type="PIRSF" id="PIRSF004983">
    <property type="entry name" value="MenD"/>
    <property type="match status" value="1"/>
</dbReference>
<dbReference type="SUPFAM" id="SSF52518">
    <property type="entry name" value="Thiamin diphosphate-binding fold (THDP-binding)"/>
    <property type="match status" value="2"/>
</dbReference>
<name>MEND_STAES</name>